<name>KITH_SALTY</name>
<gene>
    <name evidence="1" type="primary">tdk</name>
    <name type="ordered locus">STM1750</name>
</gene>
<reference key="1">
    <citation type="journal article" date="2001" name="Nature">
        <title>Complete genome sequence of Salmonella enterica serovar Typhimurium LT2.</title>
        <authorList>
            <person name="McClelland M."/>
            <person name="Sanderson K.E."/>
            <person name="Spieth J."/>
            <person name="Clifton S.W."/>
            <person name="Latreille P."/>
            <person name="Courtney L."/>
            <person name="Porwollik S."/>
            <person name="Ali J."/>
            <person name="Dante M."/>
            <person name="Du F."/>
            <person name="Hou S."/>
            <person name="Layman D."/>
            <person name="Leonard S."/>
            <person name="Nguyen C."/>
            <person name="Scott K."/>
            <person name="Holmes A."/>
            <person name="Grewal N."/>
            <person name="Mulvaney E."/>
            <person name="Ryan E."/>
            <person name="Sun H."/>
            <person name="Florea L."/>
            <person name="Miller W."/>
            <person name="Stoneking T."/>
            <person name="Nhan M."/>
            <person name="Waterston R."/>
            <person name="Wilson R.K."/>
        </authorList>
    </citation>
    <scope>NUCLEOTIDE SEQUENCE [LARGE SCALE GENOMIC DNA]</scope>
    <source>
        <strain>LT2 / SGSC1412 / ATCC 700720</strain>
    </source>
</reference>
<keyword id="KW-0067">ATP-binding</keyword>
<keyword id="KW-0963">Cytoplasm</keyword>
<keyword id="KW-0237">DNA synthesis</keyword>
<keyword id="KW-0418">Kinase</keyword>
<keyword id="KW-0479">Metal-binding</keyword>
<keyword id="KW-0547">Nucleotide-binding</keyword>
<keyword id="KW-1185">Reference proteome</keyword>
<keyword id="KW-0808">Transferase</keyword>
<keyword id="KW-0862">Zinc</keyword>
<dbReference type="EC" id="2.7.1.21" evidence="1"/>
<dbReference type="EMBL" id="AE006468">
    <property type="protein sequence ID" value="AAL20668.1"/>
    <property type="molecule type" value="Genomic_DNA"/>
</dbReference>
<dbReference type="RefSeq" id="NP_460709.1">
    <property type="nucleotide sequence ID" value="NC_003197.2"/>
</dbReference>
<dbReference type="RefSeq" id="WP_000068097.1">
    <property type="nucleotide sequence ID" value="NC_003197.2"/>
</dbReference>
<dbReference type="SMR" id="Q7CQF3"/>
<dbReference type="STRING" id="99287.STM1750"/>
<dbReference type="PaxDb" id="99287-STM1750"/>
<dbReference type="GeneID" id="1253269"/>
<dbReference type="KEGG" id="stm:STM1750"/>
<dbReference type="PATRIC" id="fig|99287.12.peg.1846"/>
<dbReference type="HOGENOM" id="CLU_064400_2_1_6"/>
<dbReference type="OMA" id="GTMDCGK"/>
<dbReference type="PhylomeDB" id="Q7CQF3"/>
<dbReference type="BioCyc" id="SENT99287:STM1750-MONOMER"/>
<dbReference type="Proteomes" id="UP000001014">
    <property type="component" value="Chromosome"/>
</dbReference>
<dbReference type="GO" id="GO:0005829">
    <property type="term" value="C:cytosol"/>
    <property type="evidence" value="ECO:0000318"/>
    <property type="project" value="GO_Central"/>
</dbReference>
<dbReference type="GO" id="GO:0005524">
    <property type="term" value="F:ATP binding"/>
    <property type="evidence" value="ECO:0007669"/>
    <property type="project" value="UniProtKB-UniRule"/>
</dbReference>
<dbReference type="GO" id="GO:0004797">
    <property type="term" value="F:thymidine kinase activity"/>
    <property type="evidence" value="ECO:0000318"/>
    <property type="project" value="GO_Central"/>
</dbReference>
<dbReference type="GO" id="GO:0008270">
    <property type="term" value="F:zinc ion binding"/>
    <property type="evidence" value="ECO:0007669"/>
    <property type="project" value="UniProtKB-UniRule"/>
</dbReference>
<dbReference type="GO" id="GO:0071897">
    <property type="term" value="P:DNA biosynthetic process"/>
    <property type="evidence" value="ECO:0007669"/>
    <property type="project" value="UniProtKB-KW"/>
</dbReference>
<dbReference type="GO" id="GO:0046104">
    <property type="term" value="P:thymidine metabolic process"/>
    <property type="evidence" value="ECO:0000318"/>
    <property type="project" value="GO_Central"/>
</dbReference>
<dbReference type="FunFam" id="3.30.60.20:FF:000017">
    <property type="entry name" value="Thymidine kinase"/>
    <property type="match status" value="1"/>
</dbReference>
<dbReference type="FunFam" id="3.40.50.300:FF:000323">
    <property type="entry name" value="Thymidine kinase"/>
    <property type="match status" value="1"/>
</dbReference>
<dbReference type="Gene3D" id="3.30.60.20">
    <property type="match status" value="1"/>
</dbReference>
<dbReference type="Gene3D" id="3.40.50.300">
    <property type="entry name" value="P-loop containing nucleotide triphosphate hydrolases"/>
    <property type="match status" value="1"/>
</dbReference>
<dbReference type="HAMAP" id="MF_00124">
    <property type="entry name" value="Thymidine_kinase"/>
    <property type="match status" value="1"/>
</dbReference>
<dbReference type="InterPro" id="IPR027417">
    <property type="entry name" value="P-loop_NTPase"/>
</dbReference>
<dbReference type="InterPro" id="IPR001267">
    <property type="entry name" value="Thymidine_kinase"/>
</dbReference>
<dbReference type="InterPro" id="IPR020633">
    <property type="entry name" value="Thymidine_kinase_CS"/>
</dbReference>
<dbReference type="NCBIfam" id="NF003298">
    <property type="entry name" value="PRK04296.1-3"/>
    <property type="match status" value="1"/>
</dbReference>
<dbReference type="NCBIfam" id="NF003300">
    <property type="entry name" value="PRK04296.1-5"/>
    <property type="match status" value="1"/>
</dbReference>
<dbReference type="PANTHER" id="PTHR11441">
    <property type="entry name" value="THYMIDINE KINASE"/>
    <property type="match status" value="1"/>
</dbReference>
<dbReference type="PANTHER" id="PTHR11441:SF0">
    <property type="entry name" value="THYMIDINE KINASE, CYTOSOLIC"/>
    <property type="match status" value="1"/>
</dbReference>
<dbReference type="Pfam" id="PF00265">
    <property type="entry name" value="TK"/>
    <property type="match status" value="1"/>
</dbReference>
<dbReference type="PIRSF" id="PIRSF035805">
    <property type="entry name" value="TK_cell"/>
    <property type="match status" value="1"/>
</dbReference>
<dbReference type="SUPFAM" id="SSF57716">
    <property type="entry name" value="Glucocorticoid receptor-like (DNA-binding domain)"/>
    <property type="match status" value="1"/>
</dbReference>
<dbReference type="SUPFAM" id="SSF52540">
    <property type="entry name" value="P-loop containing nucleoside triphosphate hydrolases"/>
    <property type="match status" value="1"/>
</dbReference>
<dbReference type="PROSITE" id="PS00603">
    <property type="entry name" value="TK_CELLULAR_TYPE"/>
    <property type="match status" value="1"/>
</dbReference>
<proteinExistence type="inferred from homology"/>
<feature type="chain" id="PRO_0000175014" description="Thymidine kinase">
    <location>
        <begin position="1"/>
        <end position="205"/>
    </location>
</feature>
<feature type="active site" description="Proton acceptor" evidence="1">
    <location>
        <position position="88"/>
    </location>
</feature>
<feature type="binding site" evidence="1">
    <location>
        <begin position="9"/>
        <end position="16"/>
    </location>
    <ligand>
        <name>ATP</name>
        <dbReference type="ChEBI" id="CHEBI:30616"/>
    </ligand>
</feature>
<feature type="binding site" evidence="1">
    <location>
        <begin position="87"/>
        <end position="90"/>
    </location>
    <ligand>
        <name>ATP</name>
        <dbReference type="ChEBI" id="CHEBI:30616"/>
    </ligand>
</feature>
<feature type="binding site" evidence="1">
    <location>
        <position position="145"/>
    </location>
    <ligand>
        <name>Zn(2+)</name>
        <dbReference type="ChEBI" id="CHEBI:29105"/>
    </ligand>
</feature>
<feature type="binding site" evidence="1">
    <location>
        <position position="147"/>
    </location>
    <ligand>
        <name>Zn(2+)</name>
        <dbReference type="ChEBI" id="CHEBI:29105"/>
    </ligand>
</feature>
<feature type="binding site" evidence="1">
    <location>
        <position position="182"/>
    </location>
    <ligand>
        <name>Zn(2+)</name>
        <dbReference type="ChEBI" id="CHEBI:29105"/>
    </ligand>
</feature>
<feature type="binding site" evidence="1">
    <location>
        <position position="185"/>
    </location>
    <ligand>
        <name>Zn(2+)</name>
        <dbReference type="ChEBI" id="CHEBI:29105"/>
    </ligand>
</feature>
<evidence type="ECO:0000255" key="1">
    <source>
        <dbReference type="HAMAP-Rule" id="MF_00124"/>
    </source>
</evidence>
<accession>Q7CQF3</accession>
<comment type="catalytic activity">
    <reaction evidence="1">
        <text>thymidine + ATP = dTMP + ADP + H(+)</text>
        <dbReference type="Rhea" id="RHEA:19129"/>
        <dbReference type="ChEBI" id="CHEBI:15378"/>
        <dbReference type="ChEBI" id="CHEBI:17748"/>
        <dbReference type="ChEBI" id="CHEBI:30616"/>
        <dbReference type="ChEBI" id="CHEBI:63528"/>
        <dbReference type="ChEBI" id="CHEBI:456216"/>
        <dbReference type="EC" id="2.7.1.21"/>
    </reaction>
</comment>
<comment type="subunit">
    <text evidence="1">Homotetramer.</text>
</comment>
<comment type="subcellular location">
    <subcellularLocation>
        <location evidence="1">Cytoplasm</location>
    </subcellularLocation>
</comment>
<comment type="similarity">
    <text evidence="1">Belongs to the thymidine kinase family.</text>
</comment>
<organism>
    <name type="scientific">Salmonella typhimurium (strain LT2 / SGSC1412 / ATCC 700720)</name>
    <dbReference type="NCBI Taxonomy" id="99287"/>
    <lineage>
        <taxon>Bacteria</taxon>
        <taxon>Pseudomonadati</taxon>
        <taxon>Pseudomonadota</taxon>
        <taxon>Gammaproteobacteria</taxon>
        <taxon>Enterobacterales</taxon>
        <taxon>Enterobacteriaceae</taxon>
        <taxon>Salmonella</taxon>
    </lineage>
</organism>
<protein>
    <recommendedName>
        <fullName evidence="1">Thymidine kinase</fullName>
        <ecNumber evidence="1">2.7.1.21</ecNumber>
    </recommendedName>
</protein>
<sequence>MAQLYFYYSAMNAGKSTALLQSSYNYQERGMRTVVYTAEIDDRFGAGKVSSRIGLSSPAKLFNQNTSLFEEIRAESARQTIHCVLVDESQFLTRQQVYQLSEVVDKLDIPVLCYGLRTDFRGELFVGSQYLLAWSDKLVELKTICFCGRKASMVLRLDQDGRPYNEGEQVVIGGNERYVSVCRKHYKDALEEGSLTAIQERHRHI</sequence>